<feature type="chain" id="PRO_0000410753" description="Topoisomerase I damage affected protein 7">
    <location>
        <begin position="1"/>
        <end position="636"/>
    </location>
</feature>
<feature type="transmembrane region" description="Helical" evidence="3">
    <location>
        <begin position="457"/>
        <end position="477"/>
    </location>
</feature>
<feature type="region of interest" description="Disordered" evidence="4">
    <location>
        <begin position="1"/>
        <end position="33"/>
    </location>
</feature>
<feature type="region of interest" description="Disordered" evidence="4">
    <location>
        <begin position="87"/>
        <end position="109"/>
    </location>
</feature>
<feature type="region of interest" description="Disordered" evidence="4">
    <location>
        <begin position="238"/>
        <end position="271"/>
    </location>
</feature>
<feature type="region of interest" description="Disordered" evidence="4">
    <location>
        <begin position="299"/>
        <end position="326"/>
    </location>
</feature>
<feature type="region of interest" description="Disordered" evidence="4">
    <location>
        <begin position="339"/>
        <end position="362"/>
    </location>
</feature>
<feature type="region of interest" description="Disordered" evidence="4">
    <location>
        <begin position="510"/>
        <end position="551"/>
    </location>
</feature>
<feature type="compositionally biased region" description="Polar residues" evidence="4">
    <location>
        <begin position="1"/>
        <end position="18"/>
    </location>
</feature>
<feature type="compositionally biased region" description="Low complexity" evidence="4">
    <location>
        <begin position="19"/>
        <end position="33"/>
    </location>
</feature>
<feature type="compositionally biased region" description="Low complexity" evidence="4">
    <location>
        <begin position="87"/>
        <end position="108"/>
    </location>
</feature>
<feature type="compositionally biased region" description="Polar residues" evidence="4">
    <location>
        <begin position="510"/>
        <end position="541"/>
    </location>
</feature>
<feature type="modified residue" description="Phosphoserine" evidence="2">
    <location>
        <position position="628"/>
    </location>
</feature>
<feature type="glycosylation site" description="N-linked (GlcNAc...) asparagine" evidence="3">
    <location>
        <position position="4"/>
    </location>
</feature>
<feature type="glycosylation site" description="N-linked (GlcNAc...) asparagine" evidence="3">
    <location>
        <position position="257"/>
    </location>
</feature>
<feature type="glycosylation site" description="N-linked (GlcNAc...) asparagine" evidence="3">
    <location>
        <position position="492"/>
    </location>
</feature>
<feature type="glycosylation site" description="N-linked (GlcNAc...) asparagine" evidence="3">
    <location>
        <position position="557"/>
    </location>
</feature>
<feature type="glycosylation site" description="N-linked (GlcNAc...) asparagine" evidence="3">
    <location>
        <position position="562"/>
    </location>
</feature>
<feature type="glycosylation site" description="N-linked (GlcNAc...) asparagine" evidence="3">
    <location>
        <position position="626"/>
    </location>
</feature>
<feature type="cross-link" description="Glycyl lysine isopeptide (Lys-Gly) (interchain with G-Cter in ubiquitin)" evidence="2">
    <location>
        <position position="512"/>
    </location>
</feature>
<proteinExistence type="inferred from homology"/>
<dbReference type="EMBL" id="AEJS01000055">
    <property type="protein sequence ID" value="EGA85207.1"/>
    <property type="molecule type" value="Genomic_DNA"/>
</dbReference>
<dbReference type="SMR" id="E7QJS8"/>
<dbReference type="GlyCosmos" id="E7QJS8">
    <property type="glycosylation" value="6 sites, No reported glycans"/>
</dbReference>
<dbReference type="HOGENOM" id="CLU_029057_0_0_1"/>
<dbReference type="OrthoDB" id="4036548at2759"/>
<dbReference type="GO" id="GO:0005774">
    <property type="term" value="C:vacuolar membrane"/>
    <property type="evidence" value="ECO:0007669"/>
    <property type="project" value="UniProtKB-SubCell"/>
</dbReference>
<accession>E7QJS8</accession>
<comment type="subcellular location">
    <subcellularLocation>
        <location evidence="1">Vacuole membrane</location>
        <topology evidence="1">Single-pass membrane protein</topology>
    </subcellularLocation>
</comment>
<comment type="similarity">
    <text evidence="5">Belongs to the TDA7 family.</text>
</comment>
<protein>
    <recommendedName>
        <fullName>Topoisomerase I damage affected protein 7</fullName>
    </recommendedName>
</protein>
<gene>
    <name type="primary">TDA7</name>
    <name type="ORF">VL3_4038</name>
</gene>
<sequence length="636" mass="67389">MNSNSTIGRTTLGESDTISLSFSEPSSSLNSRSTDVVFASTSTLVPQQGSLTSLPPVSSTATPTYYSTSLTYDETLHTSIDVSSTSTLVSSTDSSSSSEQDTYSSQYDPATSSYSIITPSMSIFSSTSPMSSSSSITSEWSSLTSTTPTLSSSATSLSSSWSSLSSPSSLLVSSSLSLSLSSSYSDTKLFSFDSRSSIFSPSTPTVISPSYTYLSSISATSFQISTTSELSSSWFSTISSPSTTSNKDTTFPSSSRNTSTSFYSSSLSSTNDFSTISKSSKLSPSASSSTVSISTISVPTSSSVSSSSSKVPSNRPSSSSSSDDTTSAYSSTYTFQSLQSTTSSSIPPTTQTPSTSTISTSPIPTSSQVFNTVAISSSEDSKTIYYFYTQTYDITDSSTTFVTGLPTTIAVAKSEVTSFSAPSSTITADMSFYQHWLDGSLDNNKNQGTSKTNTGTIVGSVVGSVGGILICVLVVWFMLVRKRKAKRHFKENDSFCHEIGRRTGFPTTAQAKEASLQAQDSGSQQRNTETASANNPFSNEFNFKARGNPPPVPPPRNVTAMNGSFQNMRSNFMDQENRFSYGSSFTYSSLGSSTQGGFSTLSSNSIRLGRGLDNDISHDERNTVQNNSQGFLREII</sequence>
<organism>
    <name type="scientific">Saccharomyces cerevisiae (strain Zymaflore VL3)</name>
    <name type="common">Baker's yeast</name>
    <dbReference type="NCBI Taxonomy" id="764100"/>
    <lineage>
        <taxon>Eukaryota</taxon>
        <taxon>Fungi</taxon>
        <taxon>Dikarya</taxon>
        <taxon>Ascomycota</taxon>
        <taxon>Saccharomycotina</taxon>
        <taxon>Saccharomycetes</taxon>
        <taxon>Saccharomycetales</taxon>
        <taxon>Saccharomycetaceae</taxon>
        <taxon>Saccharomyces</taxon>
    </lineage>
</organism>
<keyword id="KW-0325">Glycoprotein</keyword>
<keyword id="KW-1017">Isopeptide bond</keyword>
<keyword id="KW-0472">Membrane</keyword>
<keyword id="KW-0597">Phosphoprotein</keyword>
<keyword id="KW-0812">Transmembrane</keyword>
<keyword id="KW-1133">Transmembrane helix</keyword>
<keyword id="KW-0832">Ubl conjugation</keyword>
<keyword id="KW-0926">Vacuole</keyword>
<reference key="1">
    <citation type="journal article" date="2011" name="PLoS Genet.">
        <title>Whole-genome comparison reveals novel genetic elements that characterize the genome of industrial strains of Saccharomyces cerevisiae.</title>
        <authorList>
            <person name="Borneman A.R."/>
            <person name="Desany B.A."/>
            <person name="Riches D."/>
            <person name="Affourtit J.P."/>
            <person name="Forgan A.H."/>
            <person name="Pretorius I.S."/>
            <person name="Egholm M."/>
            <person name="Chambers P.J."/>
        </authorList>
    </citation>
    <scope>NUCLEOTIDE SEQUENCE [LARGE SCALE GENOMIC DNA]</scope>
    <source>
        <strain>Zymaflore VL3</strain>
    </source>
</reference>
<evidence type="ECO:0000250" key="1"/>
<evidence type="ECO:0000250" key="2">
    <source>
        <dbReference type="UniProtKB" id="P53882"/>
    </source>
</evidence>
<evidence type="ECO:0000255" key="3"/>
<evidence type="ECO:0000256" key="4">
    <source>
        <dbReference type="SAM" id="MobiDB-lite"/>
    </source>
</evidence>
<evidence type="ECO:0000305" key="5"/>
<name>TDA7_YEASZ</name>